<feature type="chain" id="PRO_1000147902" description="Polyribonucleotide nucleotidyltransferase">
    <location>
        <begin position="1"/>
        <end position="695"/>
    </location>
</feature>
<feature type="domain" description="KH" evidence="1">
    <location>
        <begin position="553"/>
        <end position="612"/>
    </location>
</feature>
<feature type="domain" description="S1 motif" evidence="1">
    <location>
        <begin position="622"/>
        <end position="690"/>
    </location>
</feature>
<feature type="binding site" evidence="1">
    <location>
        <position position="486"/>
    </location>
    <ligand>
        <name>Mg(2+)</name>
        <dbReference type="ChEBI" id="CHEBI:18420"/>
    </ligand>
</feature>
<feature type="binding site" evidence="1">
    <location>
        <position position="492"/>
    </location>
    <ligand>
        <name>Mg(2+)</name>
        <dbReference type="ChEBI" id="CHEBI:18420"/>
    </ligand>
</feature>
<dbReference type="EC" id="2.7.7.8" evidence="1"/>
<dbReference type="EMBL" id="AM884176">
    <property type="protein sequence ID" value="CAP03658.1"/>
    <property type="molecule type" value="Genomic_DNA"/>
</dbReference>
<dbReference type="RefSeq" id="WP_009873451.1">
    <property type="nucleotide sequence ID" value="NC_010287.1"/>
</dbReference>
<dbReference type="RefSeq" id="YP_001654304.1">
    <property type="nucleotide sequence ID" value="NC_010287.1"/>
</dbReference>
<dbReference type="SMR" id="B0B971"/>
<dbReference type="KEGG" id="ctb:CTL0214"/>
<dbReference type="PATRIC" id="fig|471472.4.peg.231"/>
<dbReference type="HOGENOM" id="CLU_004217_2_2_0"/>
<dbReference type="Proteomes" id="UP001154402">
    <property type="component" value="Chromosome"/>
</dbReference>
<dbReference type="GO" id="GO:0005829">
    <property type="term" value="C:cytosol"/>
    <property type="evidence" value="ECO:0007669"/>
    <property type="project" value="TreeGrafter"/>
</dbReference>
<dbReference type="GO" id="GO:0000175">
    <property type="term" value="F:3'-5'-RNA exonuclease activity"/>
    <property type="evidence" value="ECO:0007669"/>
    <property type="project" value="TreeGrafter"/>
</dbReference>
<dbReference type="GO" id="GO:0000287">
    <property type="term" value="F:magnesium ion binding"/>
    <property type="evidence" value="ECO:0007669"/>
    <property type="project" value="UniProtKB-UniRule"/>
</dbReference>
<dbReference type="GO" id="GO:0004654">
    <property type="term" value="F:polyribonucleotide nucleotidyltransferase activity"/>
    <property type="evidence" value="ECO:0007669"/>
    <property type="project" value="UniProtKB-UniRule"/>
</dbReference>
<dbReference type="GO" id="GO:0003723">
    <property type="term" value="F:RNA binding"/>
    <property type="evidence" value="ECO:0007669"/>
    <property type="project" value="UniProtKB-UniRule"/>
</dbReference>
<dbReference type="GO" id="GO:0006402">
    <property type="term" value="P:mRNA catabolic process"/>
    <property type="evidence" value="ECO:0007669"/>
    <property type="project" value="UniProtKB-UniRule"/>
</dbReference>
<dbReference type="GO" id="GO:0006396">
    <property type="term" value="P:RNA processing"/>
    <property type="evidence" value="ECO:0007669"/>
    <property type="project" value="InterPro"/>
</dbReference>
<dbReference type="CDD" id="cd02393">
    <property type="entry name" value="KH-I_PNPase"/>
    <property type="match status" value="1"/>
</dbReference>
<dbReference type="CDD" id="cd11363">
    <property type="entry name" value="RNase_PH_PNPase_1"/>
    <property type="match status" value="1"/>
</dbReference>
<dbReference type="CDD" id="cd11364">
    <property type="entry name" value="RNase_PH_PNPase_2"/>
    <property type="match status" value="1"/>
</dbReference>
<dbReference type="CDD" id="cd04472">
    <property type="entry name" value="S1_PNPase"/>
    <property type="match status" value="1"/>
</dbReference>
<dbReference type="FunFam" id="3.30.1370.10:FF:000001">
    <property type="entry name" value="Polyribonucleotide nucleotidyltransferase"/>
    <property type="match status" value="1"/>
</dbReference>
<dbReference type="FunFam" id="3.30.230.70:FF:000001">
    <property type="entry name" value="Polyribonucleotide nucleotidyltransferase"/>
    <property type="match status" value="1"/>
</dbReference>
<dbReference type="FunFam" id="3.30.230.70:FF:000049">
    <property type="entry name" value="Polyribonucleotide nucleotidyltransferase"/>
    <property type="match status" value="1"/>
</dbReference>
<dbReference type="FunFam" id="2.40.50.140:FF:000158">
    <property type="entry name" value="Polyribonucleotide nucleotidyltransferase 1, chloroplastic"/>
    <property type="match status" value="1"/>
</dbReference>
<dbReference type="Gene3D" id="3.30.230.70">
    <property type="entry name" value="GHMP Kinase, N-terminal domain"/>
    <property type="match status" value="2"/>
</dbReference>
<dbReference type="Gene3D" id="3.30.1370.10">
    <property type="entry name" value="K Homology domain, type 1"/>
    <property type="match status" value="1"/>
</dbReference>
<dbReference type="Gene3D" id="2.40.50.140">
    <property type="entry name" value="Nucleic acid-binding proteins"/>
    <property type="match status" value="1"/>
</dbReference>
<dbReference type="HAMAP" id="MF_01595">
    <property type="entry name" value="PNPase"/>
    <property type="match status" value="1"/>
</dbReference>
<dbReference type="InterPro" id="IPR001247">
    <property type="entry name" value="ExoRNase_PH_dom1"/>
</dbReference>
<dbReference type="InterPro" id="IPR015847">
    <property type="entry name" value="ExoRNase_PH_dom2"/>
</dbReference>
<dbReference type="InterPro" id="IPR036345">
    <property type="entry name" value="ExoRNase_PH_dom2_sf"/>
</dbReference>
<dbReference type="InterPro" id="IPR004087">
    <property type="entry name" value="KH_dom"/>
</dbReference>
<dbReference type="InterPro" id="IPR004088">
    <property type="entry name" value="KH_dom_type_1"/>
</dbReference>
<dbReference type="InterPro" id="IPR036612">
    <property type="entry name" value="KH_dom_type_1_sf"/>
</dbReference>
<dbReference type="InterPro" id="IPR012340">
    <property type="entry name" value="NA-bd_OB-fold"/>
</dbReference>
<dbReference type="InterPro" id="IPR012162">
    <property type="entry name" value="PNPase"/>
</dbReference>
<dbReference type="InterPro" id="IPR027408">
    <property type="entry name" value="PNPase/RNase_PH_dom_sf"/>
</dbReference>
<dbReference type="InterPro" id="IPR015848">
    <property type="entry name" value="PNPase_PH_RNA-bd_bac/org-type"/>
</dbReference>
<dbReference type="InterPro" id="IPR036456">
    <property type="entry name" value="PNPase_PH_RNA-bd_sf"/>
</dbReference>
<dbReference type="InterPro" id="IPR020568">
    <property type="entry name" value="Ribosomal_Su5_D2-typ_SF"/>
</dbReference>
<dbReference type="InterPro" id="IPR003029">
    <property type="entry name" value="S1_domain"/>
</dbReference>
<dbReference type="NCBIfam" id="TIGR03591">
    <property type="entry name" value="polynuc_phos"/>
    <property type="match status" value="1"/>
</dbReference>
<dbReference type="NCBIfam" id="NF008805">
    <property type="entry name" value="PRK11824.1"/>
    <property type="match status" value="1"/>
</dbReference>
<dbReference type="PANTHER" id="PTHR11252">
    <property type="entry name" value="POLYRIBONUCLEOTIDE NUCLEOTIDYLTRANSFERASE"/>
    <property type="match status" value="1"/>
</dbReference>
<dbReference type="PANTHER" id="PTHR11252:SF0">
    <property type="entry name" value="POLYRIBONUCLEOTIDE NUCLEOTIDYLTRANSFERASE 1, MITOCHONDRIAL"/>
    <property type="match status" value="1"/>
</dbReference>
<dbReference type="Pfam" id="PF00013">
    <property type="entry name" value="KH_1"/>
    <property type="match status" value="1"/>
</dbReference>
<dbReference type="Pfam" id="PF03726">
    <property type="entry name" value="PNPase"/>
    <property type="match status" value="1"/>
</dbReference>
<dbReference type="Pfam" id="PF01138">
    <property type="entry name" value="RNase_PH"/>
    <property type="match status" value="2"/>
</dbReference>
<dbReference type="Pfam" id="PF03725">
    <property type="entry name" value="RNase_PH_C"/>
    <property type="match status" value="2"/>
</dbReference>
<dbReference type="Pfam" id="PF00575">
    <property type="entry name" value="S1"/>
    <property type="match status" value="1"/>
</dbReference>
<dbReference type="PIRSF" id="PIRSF005499">
    <property type="entry name" value="PNPase"/>
    <property type="match status" value="1"/>
</dbReference>
<dbReference type="SMART" id="SM00322">
    <property type="entry name" value="KH"/>
    <property type="match status" value="1"/>
</dbReference>
<dbReference type="SMART" id="SM00316">
    <property type="entry name" value="S1"/>
    <property type="match status" value="1"/>
</dbReference>
<dbReference type="SUPFAM" id="SSF54791">
    <property type="entry name" value="Eukaryotic type KH-domain (KH-domain type I)"/>
    <property type="match status" value="1"/>
</dbReference>
<dbReference type="SUPFAM" id="SSF50249">
    <property type="entry name" value="Nucleic acid-binding proteins"/>
    <property type="match status" value="1"/>
</dbReference>
<dbReference type="SUPFAM" id="SSF46915">
    <property type="entry name" value="Polynucleotide phosphorylase/guanosine pentaphosphate synthase (PNPase/GPSI), domain 3"/>
    <property type="match status" value="1"/>
</dbReference>
<dbReference type="SUPFAM" id="SSF55666">
    <property type="entry name" value="Ribonuclease PH domain 2-like"/>
    <property type="match status" value="2"/>
</dbReference>
<dbReference type="SUPFAM" id="SSF54211">
    <property type="entry name" value="Ribosomal protein S5 domain 2-like"/>
    <property type="match status" value="2"/>
</dbReference>
<dbReference type="PROSITE" id="PS50084">
    <property type="entry name" value="KH_TYPE_1"/>
    <property type="match status" value="1"/>
</dbReference>
<dbReference type="PROSITE" id="PS50126">
    <property type="entry name" value="S1"/>
    <property type="match status" value="1"/>
</dbReference>
<sequence>MAFETFSVALDKDKTLIFETGKIARQASGAVLVKMNETWVFSSACAASLSEAVGFLPFRVDYQEKFSSAGRTSGGFLKREGRPSEREILVSRLIDRSLRPSFPNRLMQDIQVLSYVWSYDGKTLPDPLAICGASAALAISEVPQNCIIAGVRVGLVGGKWVINPTRDELSASKLDLVMAGTASAVLMIEGHCDFLTEEQVLEAIAFGQTYIAKICDAIEAWQKAIGKQKNFSAVLDMPEDVQNVVSDFIREKFEKALSFRDKEALEQASKELEESVIANLVQEENSDFSLLNVKAAFKTAKSNQMRALIQDLGIRVDGRTTTEIRPISIETPLLPRTHGSCLFTRGETQSMAVCTLGGENMAQRFEDLNGDGAARFYLQYFFPPFSVGEVGRIGSPGRREIGHGKLAEKALSHVLPETSRFPYIIRLESNITESNGSSSMASVCGGCLALMDAGVPIKAPVAGIAMGLILDRDQAIILSDISGIEDHLGDMDFKVAGTAKGITAFQMDIKIEGITHKIMEQALAQAKQGRSHILNLMTQVLASPKGTVSKYAPRIETMQINTSKIATVIGPGGKQIRQIIERSGAQVDINDDGVINIAASTQESINKAKELIEGLTGEVEVGKVYNGRVTSIATFGVFVEVLPGKEGLCHISELSKQKVDNISDFVKEGDKLAVKLLSINEKGQLKLSHKATLED</sequence>
<comment type="function">
    <text evidence="1">Involved in mRNA degradation. Catalyzes the phosphorolysis of single-stranded polyribonucleotides processively in the 3'- to 5'-direction.</text>
</comment>
<comment type="catalytic activity">
    <reaction evidence="1">
        <text>RNA(n+1) + phosphate = RNA(n) + a ribonucleoside 5'-diphosphate</text>
        <dbReference type="Rhea" id="RHEA:22096"/>
        <dbReference type="Rhea" id="RHEA-COMP:14527"/>
        <dbReference type="Rhea" id="RHEA-COMP:17342"/>
        <dbReference type="ChEBI" id="CHEBI:43474"/>
        <dbReference type="ChEBI" id="CHEBI:57930"/>
        <dbReference type="ChEBI" id="CHEBI:140395"/>
        <dbReference type="EC" id="2.7.7.8"/>
    </reaction>
</comment>
<comment type="cofactor">
    <cofactor evidence="1">
        <name>Mg(2+)</name>
        <dbReference type="ChEBI" id="CHEBI:18420"/>
    </cofactor>
</comment>
<comment type="subcellular location">
    <subcellularLocation>
        <location evidence="1">Cytoplasm</location>
    </subcellularLocation>
</comment>
<comment type="similarity">
    <text evidence="1">Belongs to the polyribonucleotide nucleotidyltransferase family.</text>
</comment>
<gene>
    <name evidence="1" type="primary">pnp</name>
    <name type="ordered locus">CTL0214</name>
</gene>
<proteinExistence type="inferred from homology"/>
<organism>
    <name type="scientific">Chlamydia trachomatis serovar L2 (strain ATCC VR-902B / DSM 19102 / 434/Bu)</name>
    <dbReference type="NCBI Taxonomy" id="471472"/>
    <lineage>
        <taxon>Bacteria</taxon>
        <taxon>Pseudomonadati</taxon>
        <taxon>Chlamydiota</taxon>
        <taxon>Chlamydiia</taxon>
        <taxon>Chlamydiales</taxon>
        <taxon>Chlamydiaceae</taxon>
        <taxon>Chlamydia/Chlamydophila group</taxon>
        <taxon>Chlamydia</taxon>
    </lineage>
</organism>
<name>PNP_CHLT2</name>
<reference key="1">
    <citation type="journal article" date="2008" name="Genome Res.">
        <title>Chlamydia trachomatis: genome sequence analysis of lymphogranuloma venereum isolates.</title>
        <authorList>
            <person name="Thomson N.R."/>
            <person name="Holden M.T.G."/>
            <person name="Carder C."/>
            <person name="Lennard N."/>
            <person name="Lockey S.J."/>
            <person name="Marsh P."/>
            <person name="Skipp P."/>
            <person name="O'Connor C.D."/>
            <person name="Goodhead I."/>
            <person name="Norbertzcak H."/>
            <person name="Harris B."/>
            <person name="Ormond D."/>
            <person name="Rance R."/>
            <person name="Quail M.A."/>
            <person name="Parkhill J."/>
            <person name="Stephens R.S."/>
            <person name="Clarke I.N."/>
        </authorList>
    </citation>
    <scope>NUCLEOTIDE SEQUENCE [LARGE SCALE GENOMIC DNA]</scope>
    <source>
        <strain>ATCC VR-902B / DSM 19102 / 434/Bu</strain>
    </source>
</reference>
<accession>B0B971</accession>
<keyword id="KW-0963">Cytoplasm</keyword>
<keyword id="KW-0460">Magnesium</keyword>
<keyword id="KW-0479">Metal-binding</keyword>
<keyword id="KW-0548">Nucleotidyltransferase</keyword>
<keyword id="KW-0694">RNA-binding</keyword>
<keyword id="KW-0808">Transferase</keyword>
<evidence type="ECO:0000255" key="1">
    <source>
        <dbReference type="HAMAP-Rule" id="MF_01595"/>
    </source>
</evidence>
<protein>
    <recommendedName>
        <fullName evidence="1">Polyribonucleotide nucleotidyltransferase</fullName>
        <ecNumber evidence="1">2.7.7.8</ecNumber>
    </recommendedName>
    <alternativeName>
        <fullName evidence="1">Polynucleotide phosphorylase</fullName>
        <shortName evidence="1">PNPase</shortName>
    </alternativeName>
</protein>